<sequence length="307" mass="34947">MEAHKPVLFDEVMEGLAIRPDGIYVDGTFGRGGHSFGILQRLGPNGRLMAMDKDPDAVAVENKALFEDARLSIVHETFANLQKAVRDRGWEGKVNGILLDIGVSSPQLEDAKRGFSFSKDGPLDMRMNPKQSMDAASWINQAAMEDIRRVLWNYGEERFAKRIAQAIVNAREEKPITRTQELSDIVIKAYPQREIKKHPATRTFQAIRIFINRELDELRECLPQCLETLAVGGRLCVISFHSLEDRLVKRFIQKESRDHLPREIPILAKDIKHRLKPLGSLIRPTEAEIKKNPRARSARLRIVEKLS</sequence>
<evidence type="ECO:0000255" key="1">
    <source>
        <dbReference type="HAMAP-Rule" id="MF_01007"/>
    </source>
</evidence>
<accession>B6J2R7</accession>
<organism>
    <name type="scientific">Coxiella burnetii (strain CbuG_Q212)</name>
    <name type="common">Coxiella burnetii (strain Q212)</name>
    <dbReference type="NCBI Taxonomy" id="434923"/>
    <lineage>
        <taxon>Bacteria</taxon>
        <taxon>Pseudomonadati</taxon>
        <taxon>Pseudomonadota</taxon>
        <taxon>Gammaproteobacteria</taxon>
        <taxon>Legionellales</taxon>
        <taxon>Coxiellaceae</taxon>
        <taxon>Coxiella</taxon>
    </lineage>
</organism>
<name>RSMH_COXB2</name>
<keyword id="KW-0963">Cytoplasm</keyword>
<keyword id="KW-0489">Methyltransferase</keyword>
<keyword id="KW-0698">rRNA processing</keyword>
<keyword id="KW-0949">S-adenosyl-L-methionine</keyword>
<keyword id="KW-0808">Transferase</keyword>
<proteinExistence type="inferred from homology"/>
<feature type="chain" id="PRO_0000386831" description="Ribosomal RNA small subunit methyltransferase H">
    <location>
        <begin position="1"/>
        <end position="307"/>
    </location>
</feature>
<feature type="binding site" evidence="1">
    <location>
        <begin position="32"/>
        <end position="34"/>
    </location>
    <ligand>
        <name>S-adenosyl-L-methionine</name>
        <dbReference type="ChEBI" id="CHEBI:59789"/>
    </ligand>
</feature>
<feature type="binding site" evidence="1">
    <location>
        <position position="52"/>
    </location>
    <ligand>
        <name>S-adenosyl-L-methionine</name>
        <dbReference type="ChEBI" id="CHEBI:59789"/>
    </ligand>
</feature>
<feature type="binding site" evidence="1">
    <location>
        <position position="78"/>
    </location>
    <ligand>
        <name>S-adenosyl-L-methionine</name>
        <dbReference type="ChEBI" id="CHEBI:59789"/>
    </ligand>
</feature>
<feature type="binding site" evidence="1">
    <location>
        <position position="100"/>
    </location>
    <ligand>
        <name>S-adenosyl-L-methionine</name>
        <dbReference type="ChEBI" id="CHEBI:59789"/>
    </ligand>
</feature>
<feature type="binding site" evidence="1">
    <location>
        <position position="107"/>
    </location>
    <ligand>
        <name>S-adenosyl-L-methionine</name>
        <dbReference type="ChEBI" id="CHEBI:59789"/>
    </ligand>
</feature>
<reference key="1">
    <citation type="journal article" date="2009" name="Infect. Immun.">
        <title>Comparative genomics reveal extensive transposon-mediated genomic plasticity and diversity among potential effector proteins within the genus Coxiella.</title>
        <authorList>
            <person name="Beare P.A."/>
            <person name="Unsworth N."/>
            <person name="Andoh M."/>
            <person name="Voth D.E."/>
            <person name="Omsland A."/>
            <person name="Gilk S.D."/>
            <person name="Williams K.P."/>
            <person name="Sobral B.W."/>
            <person name="Kupko J.J. III"/>
            <person name="Porcella S.F."/>
            <person name="Samuel J.E."/>
            <person name="Heinzen R.A."/>
        </authorList>
    </citation>
    <scope>NUCLEOTIDE SEQUENCE [LARGE SCALE GENOMIC DNA]</scope>
    <source>
        <strain>CbuG_Q212</strain>
    </source>
</reference>
<gene>
    <name evidence="1" type="primary">rsmH</name>
    <name type="synonym">mraW</name>
    <name type="ordered locus">CbuG_1896</name>
</gene>
<comment type="function">
    <text evidence="1">Specifically methylates the N4 position of cytidine in position 1402 (C1402) of 16S rRNA.</text>
</comment>
<comment type="catalytic activity">
    <reaction evidence="1">
        <text>cytidine(1402) in 16S rRNA + S-adenosyl-L-methionine = N(4)-methylcytidine(1402) in 16S rRNA + S-adenosyl-L-homocysteine + H(+)</text>
        <dbReference type="Rhea" id="RHEA:42928"/>
        <dbReference type="Rhea" id="RHEA-COMP:10286"/>
        <dbReference type="Rhea" id="RHEA-COMP:10287"/>
        <dbReference type="ChEBI" id="CHEBI:15378"/>
        <dbReference type="ChEBI" id="CHEBI:57856"/>
        <dbReference type="ChEBI" id="CHEBI:59789"/>
        <dbReference type="ChEBI" id="CHEBI:74506"/>
        <dbReference type="ChEBI" id="CHEBI:82748"/>
        <dbReference type="EC" id="2.1.1.199"/>
    </reaction>
</comment>
<comment type="subcellular location">
    <subcellularLocation>
        <location evidence="1">Cytoplasm</location>
    </subcellularLocation>
</comment>
<comment type="similarity">
    <text evidence="1">Belongs to the methyltransferase superfamily. RsmH family.</text>
</comment>
<dbReference type="EC" id="2.1.1.199" evidence="1"/>
<dbReference type="EMBL" id="CP001019">
    <property type="protein sequence ID" value="ACJ19144.1"/>
    <property type="molecule type" value="Genomic_DNA"/>
</dbReference>
<dbReference type="RefSeq" id="WP_012570468.1">
    <property type="nucleotide sequence ID" value="NC_011527.1"/>
</dbReference>
<dbReference type="SMR" id="B6J2R7"/>
<dbReference type="KEGG" id="cbg:CbuG_1896"/>
<dbReference type="HOGENOM" id="CLU_038422_2_0_6"/>
<dbReference type="GO" id="GO:0005737">
    <property type="term" value="C:cytoplasm"/>
    <property type="evidence" value="ECO:0007669"/>
    <property type="project" value="UniProtKB-SubCell"/>
</dbReference>
<dbReference type="GO" id="GO:0071424">
    <property type="term" value="F:rRNA (cytosine-N4-)-methyltransferase activity"/>
    <property type="evidence" value="ECO:0007669"/>
    <property type="project" value="UniProtKB-UniRule"/>
</dbReference>
<dbReference type="GO" id="GO:0070475">
    <property type="term" value="P:rRNA base methylation"/>
    <property type="evidence" value="ECO:0007669"/>
    <property type="project" value="UniProtKB-UniRule"/>
</dbReference>
<dbReference type="FunFam" id="1.10.150.170:FF:000001">
    <property type="entry name" value="Ribosomal RNA small subunit methyltransferase H"/>
    <property type="match status" value="1"/>
</dbReference>
<dbReference type="Gene3D" id="1.10.150.170">
    <property type="entry name" value="Putative methyltransferase TM0872, insert domain"/>
    <property type="match status" value="1"/>
</dbReference>
<dbReference type="Gene3D" id="3.40.50.150">
    <property type="entry name" value="Vaccinia Virus protein VP39"/>
    <property type="match status" value="1"/>
</dbReference>
<dbReference type="HAMAP" id="MF_01007">
    <property type="entry name" value="16SrRNA_methyltr_H"/>
    <property type="match status" value="1"/>
</dbReference>
<dbReference type="InterPro" id="IPR002903">
    <property type="entry name" value="RsmH"/>
</dbReference>
<dbReference type="InterPro" id="IPR023397">
    <property type="entry name" value="SAM-dep_MeTrfase_MraW_recog"/>
</dbReference>
<dbReference type="InterPro" id="IPR029063">
    <property type="entry name" value="SAM-dependent_MTases_sf"/>
</dbReference>
<dbReference type="NCBIfam" id="TIGR00006">
    <property type="entry name" value="16S rRNA (cytosine(1402)-N(4))-methyltransferase RsmH"/>
    <property type="match status" value="1"/>
</dbReference>
<dbReference type="PANTHER" id="PTHR11265:SF0">
    <property type="entry name" value="12S RRNA N4-METHYLCYTIDINE METHYLTRANSFERASE"/>
    <property type="match status" value="1"/>
</dbReference>
<dbReference type="PANTHER" id="PTHR11265">
    <property type="entry name" value="S-ADENOSYL-METHYLTRANSFERASE MRAW"/>
    <property type="match status" value="1"/>
</dbReference>
<dbReference type="Pfam" id="PF01795">
    <property type="entry name" value="Methyltransf_5"/>
    <property type="match status" value="1"/>
</dbReference>
<dbReference type="PIRSF" id="PIRSF004486">
    <property type="entry name" value="MraW"/>
    <property type="match status" value="1"/>
</dbReference>
<dbReference type="SUPFAM" id="SSF81799">
    <property type="entry name" value="Putative methyltransferase TM0872, insert domain"/>
    <property type="match status" value="1"/>
</dbReference>
<dbReference type="SUPFAM" id="SSF53335">
    <property type="entry name" value="S-adenosyl-L-methionine-dependent methyltransferases"/>
    <property type="match status" value="1"/>
</dbReference>
<protein>
    <recommendedName>
        <fullName evidence="1">Ribosomal RNA small subunit methyltransferase H</fullName>
        <ecNumber evidence="1">2.1.1.199</ecNumber>
    </recommendedName>
    <alternativeName>
        <fullName evidence="1">16S rRNA m(4)C1402 methyltransferase</fullName>
    </alternativeName>
    <alternativeName>
        <fullName evidence="1">rRNA (cytosine-N(4)-)-methyltransferase RsmH</fullName>
    </alternativeName>
</protein>